<feature type="chain" id="PRO_0000193946" description="Iron-sulfur cluster assembly protein CyaY">
    <location>
        <begin position="1"/>
        <end position="107"/>
    </location>
</feature>
<organism>
    <name type="scientific">Neisseria meningitidis serogroup B (strain ATCC BAA-335 / MC58)</name>
    <dbReference type="NCBI Taxonomy" id="122586"/>
    <lineage>
        <taxon>Bacteria</taxon>
        <taxon>Pseudomonadati</taxon>
        <taxon>Pseudomonadota</taxon>
        <taxon>Betaproteobacteria</taxon>
        <taxon>Neisseriales</taxon>
        <taxon>Neisseriaceae</taxon>
        <taxon>Neisseria</taxon>
    </lineage>
</organism>
<comment type="function">
    <text evidence="1">Involved in iron-sulfur (Fe-S) cluster assembly. May act as a regulator of Fe-S biogenesis.</text>
</comment>
<comment type="similarity">
    <text evidence="1 2">Belongs to the frataxin family.</text>
</comment>
<proteinExistence type="inferred from homology"/>
<keyword id="KW-0408">Iron</keyword>
<keyword id="KW-0479">Metal-binding</keyword>
<keyword id="KW-1185">Reference proteome</keyword>
<sequence>MMTESEFIRASEALFEHIEDQIDENGWDFDCRFAGNVLTIEAGDGAQIIVNRHTPNQELWIAAKSGGYHFAEQNGKWLATRDGRDFYDVLNEALSAASGEAVEIAEL</sequence>
<accession>P56977</accession>
<dbReference type="EMBL" id="AE002098">
    <property type="protein sequence ID" value="AAF42306.1"/>
    <property type="molecule type" value="Genomic_DNA"/>
</dbReference>
<dbReference type="PIR" id="C81020">
    <property type="entry name" value="C81020"/>
</dbReference>
<dbReference type="RefSeq" id="NP_274971.1">
    <property type="nucleotide sequence ID" value="NC_003112.2"/>
</dbReference>
<dbReference type="RefSeq" id="WP_002225851.1">
    <property type="nucleotide sequence ID" value="NC_003112.2"/>
</dbReference>
<dbReference type="SMR" id="P56977"/>
<dbReference type="FunCoup" id="P56977">
    <property type="interactions" value="202"/>
</dbReference>
<dbReference type="STRING" id="122586.NMB1978"/>
<dbReference type="PaxDb" id="122586-NMB1978"/>
<dbReference type="KEGG" id="nme:NMB1978"/>
<dbReference type="PATRIC" id="fig|122586.8.peg.2520"/>
<dbReference type="HOGENOM" id="CLU_080880_3_0_4"/>
<dbReference type="InParanoid" id="P56977"/>
<dbReference type="OrthoDB" id="285675at2"/>
<dbReference type="Proteomes" id="UP000000425">
    <property type="component" value="Chromosome"/>
</dbReference>
<dbReference type="GO" id="GO:0005737">
    <property type="term" value="C:cytoplasm"/>
    <property type="evidence" value="ECO:0007669"/>
    <property type="project" value="UniProtKB-ARBA"/>
</dbReference>
<dbReference type="GO" id="GO:0008199">
    <property type="term" value="F:ferric iron binding"/>
    <property type="evidence" value="ECO:0007669"/>
    <property type="project" value="InterPro"/>
</dbReference>
<dbReference type="GO" id="GO:0016226">
    <property type="term" value="P:iron-sulfur cluster assembly"/>
    <property type="evidence" value="ECO:0000318"/>
    <property type="project" value="GO_Central"/>
</dbReference>
<dbReference type="CDD" id="cd00503">
    <property type="entry name" value="Frataxin"/>
    <property type="match status" value="1"/>
</dbReference>
<dbReference type="Gene3D" id="3.30.920.10">
    <property type="entry name" value="Frataxin/CyaY"/>
    <property type="match status" value="1"/>
</dbReference>
<dbReference type="HAMAP" id="MF_00142">
    <property type="entry name" value="CyaY"/>
    <property type="match status" value="1"/>
</dbReference>
<dbReference type="InterPro" id="IPR047584">
    <property type="entry name" value="CyaY"/>
</dbReference>
<dbReference type="InterPro" id="IPR002908">
    <property type="entry name" value="Frataxin/CyaY"/>
</dbReference>
<dbReference type="InterPro" id="IPR036524">
    <property type="entry name" value="Frataxin/CyaY_sf"/>
</dbReference>
<dbReference type="InterPro" id="IPR020895">
    <property type="entry name" value="Frataxin_CS"/>
</dbReference>
<dbReference type="NCBIfam" id="TIGR03421">
    <property type="entry name" value="FeS_CyaY"/>
    <property type="match status" value="1"/>
</dbReference>
<dbReference type="PANTHER" id="PTHR16821">
    <property type="entry name" value="FRATAXIN"/>
    <property type="match status" value="1"/>
</dbReference>
<dbReference type="PANTHER" id="PTHR16821:SF2">
    <property type="entry name" value="FRATAXIN, MITOCHONDRIAL"/>
    <property type="match status" value="1"/>
</dbReference>
<dbReference type="Pfam" id="PF01491">
    <property type="entry name" value="Frataxin_Cyay"/>
    <property type="match status" value="1"/>
</dbReference>
<dbReference type="SMART" id="SM01219">
    <property type="entry name" value="Frataxin_Cyay"/>
    <property type="match status" value="1"/>
</dbReference>
<dbReference type="SUPFAM" id="SSF55387">
    <property type="entry name" value="Frataxin/Nqo15-like"/>
    <property type="match status" value="1"/>
</dbReference>
<dbReference type="PROSITE" id="PS01344">
    <property type="entry name" value="FRATAXIN_1"/>
    <property type="match status" value="1"/>
</dbReference>
<dbReference type="PROSITE" id="PS50810">
    <property type="entry name" value="FRATAXIN_2"/>
    <property type="match status" value="1"/>
</dbReference>
<evidence type="ECO:0000255" key="1">
    <source>
        <dbReference type="HAMAP-Rule" id="MF_00142"/>
    </source>
</evidence>
<evidence type="ECO:0000305" key="2"/>
<name>CYAY_NEIMB</name>
<reference key="1">
    <citation type="journal article" date="2000" name="Science">
        <title>Complete genome sequence of Neisseria meningitidis serogroup B strain MC58.</title>
        <authorList>
            <person name="Tettelin H."/>
            <person name="Saunders N.J."/>
            <person name="Heidelberg J.F."/>
            <person name="Jeffries A.C."/>
            <person name="Nelson K.E."/>
            <person name="Eisen J.A."/>
            <person name="Ketchum K.A."/>
            <person name="Hood D.W."/>
            <person name="Peden J.F."/>
            <person name="Dodson R.J."/>
            <person name="Nelson W.C."/>
            <person name="Gwinn M.L."/>
            <person name="DeBoy R.T."/>
            <person name="Peterson J.D."/>
            <person name="Hickey E.K."/>
            <person name="Haft D.H."/>
            <person name="Salzberg S.L."/>
            <person name="White O."/>
            <person name="Fleischmann R.D."/>
            <person name="Dougherty B.A."/>
            <person name="Mason T.M."/>
            <person name="Ciecko A."/>
            <person name="Parksey D.S."/>
            <person name="Blair E."/>
            <person name="Cittone H."/>
            <person name="Clark E.B."/>
            <person name="Cotton M.D."/>
            <person name="Utterback T.R."/>
            <person name="Khouri H.M."/>
            <person name="Qin H."/>
            <person name="Vamathevan J.J."/>
            <person name="Gill J."/>
            <person name="Scarlato V."/>
            <person name="Masignani V."/>
            <person name="Pizza M."/>
            <person name="Grandi G."/>
            <person name="Sun L."/>
            <person name="Smith H.O."/>
            <person name="Fraser C.M."/>
            <person name="Moxon E.R."/>
            <person name="Rappuoli R."/>
            <person name="Venter J.C."/>
        </authorList>
    </citation>
    <scope>NUCLEOTIDE SEQUENCE [LARGE SCALE GENOMIC DNA]</scope>
    <source>
        <strain>ATCC BAA-335 / MC58</strain>
    </source>
</reference>
<gene>
    <name evidence="1" type="primary">cyaY</name>
    <name type="ordered locus">NMB1978</name>
</gene>
<protein>
    <recommendedName>
        <fullName evidence="1">Iron-sulfur cluster assembly protein CyaY</fullName>
    </recommendedName>
</protein>